<gene>
    <name type="primary">isdH</name>
    <name type="synonym">harA</name>
    <name type="synonym">sasI</name>
    <name type="ordered locus">SAOUHSC_01843</name>
</gene>
<protein>
    <recommendedName>
        <fullName>Iron-regulated surface determinant protein H</fullName>
    </recommendedName>
    <alternativeName>
        <fullName>Haptoglobin receptor A</fullName>
    </alternativeName>
    <alternativeName>
        <fullName>Staphylococcus aureus surface protein I</fullName>
    </alternativeName>
</protein>
<organism>
    <name type="scientific">Staphylococcus aureus (strain NCTC 8325 / PS 47)</name>
    <dbReference type="NCBI Taxonomy" id="93061"/>
    <lineage>
        <taxon>Bacteria</taxon>
        <taxon>Bacillati</taxon>
        <taxon>Bacillota</taxon>
        <taxon>Bacilli</taxon>
        <taxon>Bacillales</taxon>
        <taxon>Staphylococcaceae</taxon>
        <taxon>Staphylococcus</taxon>
    </lineage>
</organism>
<sequence>MNKHHPKLRSFYSIRKSTLGVASVIVSTLFLITSQHQAQAAENTNTSDKISENQNNNATTTQPPKDTNQTQPATQPANTAKNYPAADESLKDAIKDPALENKEHDIGPREQVNFQLLDKNNETQYYHFFSIKDPADVYYTKKKAEVELDINTASTWKKFEVYENNQKLPVRLVSYSPVPEDHAYIRFPVSDGTQELKIVSSTQIDDGEETNYDYTKLVFAKPIYNDPSLVKSDTNDAVVTNDQSSSVASNQTNTNTSNQNISTINNANNQPQATTNMSQPAQPKSSTNADQASSQPAHETNSNGNTNDKTNESSNQSDVNQQYPPADESLQDAIKNPAIIDKEHTADNWRPIDFQMKNDKGERQFYHYASTVEPATVIFTKTGPIIELGLKTASTWKKFEVYEGDKKLPVELVSYDSDKDYAYIRFPVSNGTREVKIVSSIEYGENIHEDYDYTLMVFAQPITNNPDDYVDEETYNLQKLLAPYHKAKTLERQVYELEKLQEKLPEKYKAEYKKKLDQTRVELADQVKSAVTEFENVTPTNDQLTDLQEAHFVVFESEENSESVMDGFVEHPFYTATLNGQKYVVMKTKDDSYWKDLIVEGKRVTTVSKDPKNNSRTLIFPYIPDKAVYNAIVKVVVANIGYEGQYHVRIINQDINTKDDDTSQNNTSEPLNVQTGQEGKVADTDVAENSSTATNPKDASDKADVIEPESDVVKDADNNIDKDVQHDVDHLSDMSDNNHFDKYDLKEMDTQIAKDTDRNVDKDADNSVGMSSNVDTDKDSNKNKDKVIQLNHIADKNNHTGKAAKLDVVKQNYNNTDKVTDKKTTEHLPSDIHKTVDKTVKTKEKAGTPSKENKLSQSKMLPKTGETTSSQSWWGLYALLGMLALFIPKFRKESK</sequence>
<reference key="1">
    <citation type="book" date="2006" name="Gram positive pathogens, 2nd edition">
        <title>The Staphylococcus aureus NCTC 8325 genome.</title>
        <editorList>
            <person name="Fischetti V."/>
            <person name="Novick R."/>
            <person name="Ferretti J."/>
            <person name="Portnoy D."/>
            <person name="Rood J."/>
        </editorList>
        <authorList>
            <person name="Gillaspy A.F."/>
            <person name="Worrell V."/>
            <person name="Orvis J."/>
            <person name="Roe B.A."/>
            <person name="Dyer D.W."/>
            <person name="Iandolo J.J."/>
        </authorList>
    </citation>
    <scope>NUCLEOTIDE SEQUENCE [LARGE SCALE GENOMIC DNA]</scope>
    <source>
        <strain>NCTC 8325 / PS 47</strain>
    </source>
</reference>
<reference key="2">
    <citation type="journal article" date="2003" name="Mol. Microbiol.">
        <title>Identification of a novel iron regulated staphylococcal surface protein with haptoglobin-haemoglobin binding activity.</title>
        <authorList>
            <person name="Dryla A."/>
            <person name="Gelbmann D."/>
            <person name="von Gabain A."/>
            <person name="Nagy E."/>
        </authorList>
    </citation>
    <scope>FUNCTION</scope>
    <scope>REGULATION BY FUR AND IRON</scope>
</reference>
<comment type="function">
    <text evidence="6">Binds human plasma haptoglobin-hemoglobin complexes, haptoglobin and hemoglobin. Binds haptoglobin-hemoglobin complexes with significantly higher affinity than haptoglobin alone.</text>
</comment>
<comment type="subcellular location">
    <subcellularLocation>
        <location evidence="7">Secreted</location>
        <location evidence="7">Cell wall</location>
        <topology evidence="7">Peptidoglycan-anchor</topology>
    </subcellularLocation>
</comment>
<comment type="induction">
    <text>Expression was observed only in the late logarithmic and stationary phase. Repressed by the ferric uptake repressor (fur) protein in the presence of iron.</text>
</comment>
<comment type="domain">
    <text evidence="1">The NEAT 1 domain binds with higher affinity than the NEAT 2 domain haptoglobin-hemoglobin complexes, haptoglobin and hemoglobin.</text>
</comment>
<comment type="similarity">
    <text evidence="7">Belongs to the IsdH family.</text>
</comment>
<proteinExistence type="evidence at protein level"/>
<evidence type="ECO:0000250" key="1"/>
<evidence type="ECO:0000255" key="2"/>
<evidence type="ECO:0000255" key="3">
    <source>
        <dbReference type="PROSITE-ProRule" id="PRU00337"/>
    </source>
</evidence>
<evidence type="ECO:0000255" key="4">
    <source>
        <dbReference type="PROSITE-ProRule" id="PRU00477"/>
    </source>
</evidence>
<evidence type="ECO:0000256" key="5">
    <source>
        <dbReference type="SAM" id="MobiDB-lite"/>
    </source>
</evidence>
<evidence type="ECO:0000269" key="6">
    <source>
    </source>
</evidence>
<evidence type="ECO:0000305" key="7"/>
<evidence type="ECO:0007829" key="8">
    <source>
        <dbReference type="PDB" id="6TB2"/>
    </source>
</evidence>
<feature type="signal peptide" evidence="2">
    <location>
        <begin position="1"/>
        <end position="40"/>
    </location>
</feature>
<feature type="chain" id="PRO_0000285193" description="Iron-regulated surface determinant protein H">
    <location>
        <begin position="41"/>
        <end position="864"/>
    </location>
</feature>
<feature type="propeptide" id="PRO_0000285194" description="Removed by sortase" evidence="4">
    <location>
        <begin position="865"/>
        <end position="895"/>
    </location>
</feature>
<feature type="domain" description="NEAT 1" evidence="3">
    <location>
        <begin position="105"/>
        <end position="232"/>
    </location>
</feature>
<feature type="domain" description="NEAT 2" evidence="3">
    <location>
        <begin position="345"/>
        <end position="471"/>
    </location>
</feature>
<feature type="domain" description="NEAT 3" evidence="3">
    <location>
        <begin position="543"/>
        <end position="660"/>
    </location>
</feature>
<feature type="region of interest" description="Disordered" evidence="5">
    <location>
        <begin position="42"/>
        <end position="85"/>
    </location>
</feature>
<feature type="region of interest" description="Disordered" evidence="5">
    <location>
        <begin position="241"/>
        <end position="324"/>
    </location>
</feature>
<feature type="region of interest" description="Disordered" evidence="5">
    <location>
        <begin position="657"/>
        <end position="720"/>
    </location>
</feature>
<feature type="region of interest" description="Disordered" evidence="5">
    <location>
        <begin position="751"/>
        <end position="782"/>
    </location>
</feature>
<feature type="region of interest" description="Disordered" evidence="5">
    <location>
        <begin position="841"/>
        <end position="868"/>
    </location>
</feature>
<feature type="short sequence motif" description="LPXTG sorting signal" evidence="4">
    <location>
        <begin position="861"/>
        <end position="865"/>
    </location>
</feature>
<feature type="compositionally biased region" description="Low complexity" evidence="5">
    <location>
        <begin position="53"/>
        <end position="62"/>
    </location>
</feature>
<feature type="compositionally biased region" description="Polar residues" evidence="5">
    <location>
        <begin position="63"/>
        <end position="81"/>
    </location>
</feature>
<feature type="compositionally biased region" description="Low complexity" evidence="5">
    <location>
        <begin position="243"/>
        <end position="276"/>
    </location>
</feature>
<feature type="compositionally biased region" description="Polar residues" evidence="5">
    <location>
        <begin position="277"/>
        <end position="323"/>
    </location>
</feature>
<feature type="compositionally biased region" description="Polar residues" evidence="5">
    <location>
        <begin position="663"/>
        <end position="677"/>
    </location>
</feature>
<feature type="compositionally biased region" description="Polar residues" evidence="5">
    <location>
        <begin position="687"/>
        <end position="697"/>
    </location>
</feature>
<feature type="compositionally biased region" description="Basic and acidic residues" evidence="5">
    <location>
        <begin position="698"/>
        <end position="720"/>
    </location>
</feature>
<feature type="compositionally biased region" description="Basic and acidic residues" evidence="5">
    <location>
        <begin position="751"/>
        <end position="765"/>
    </location>
</feature>
<feature type="compositionally biased region" description="Basic and acidic residues" evidence="5">
    <location>
        <begin position="841"/>
        <end position="854"/>
    </location>
</feature>
<feature type="compositionally biased region" description="Polar residues" evidence="5">
    <location>
        <begin position="855"/>
        <end position="868"/>
    </location>
</feature>
<feature type="modified residue" description="Pentaglycyl murein peptidoglycan amidated threonine" evidence="4">
    <location>
        <position position="864"/>
    </location>
</feature>
<feature type="turn" evidence="8">
    <location>
        <begin position="326"/>
        <end position="328"/>
    </location>
</feature>
<feature type="helix" evidence="8">
    <location>
        <begin position="330"/>
        <end position="333"/>
    </location>
</feature>
<feature type="turn" evidence="8">
    <location>
        <begin position="337"/>
        <end position="339"/>
    </location>
</feature>
<feature type="strand" evidence="8">
    <location>
        <begin position="347"/>
        <end position="352"/>
    </location>
</feature>
<feature type="strand" evidence="8">
    <location>
        <begin position="354"/>
        <end position="357"/>
    </location>
</feature>
<feature type="strand" evidence="8">
    <location>
        <begin position="361"/>
        <end position="363"/>
    </location>
</feature>
<feature type="helix" evidence="8">
    <location>
        <begin position="365"/>
        <end position="369"/>
    </location>
</feature>
<feature type="strand" evidence="8">
    <location>
        <begin position="371"/>
        <end position="379"/>
    </location>
</feature>
<feature type="strand" evidence="8">
    <location>
        <begin position="384"/>
        <end position="392"/>
    </location>
</feature>
<feature type="helix" evidence="8">
    <location>
        <begin position="393"/>
        <end position="395"/>
    </location>
</feature>
<feature type="strand" evidence="8">
    <location>
        <begin position="396"/>
        <end position="403"/>
    </location>
</feature>
<feature type="strand" evidence="8">
    <location>
        <begin position="406"/>
        <end position="408"/>
    </location>
</feature>
<feature type="strand" evidence="8">
    <location>
        <begin position="411"/>
        <end position="416"/>
    </location>
</feature>
<feature type="turn" evidence="8">
    <location>
        <begin position="417"/>
        <end position="420"/>
    </location>
</feature>
<feature type="strand" evidence="8">
    <location>
        <begin position="421"/>
        <end position="427"/>
    </location>
</feature>
<feature type="strand" evidence="8">
    <location>
        <begin position="432"/>
        <end position="443"/>
    </location>
</feature>
<feature type="turn" evidence="8">
    <location>
        <begin position="444"/>
        <end position="446"/>
    </location>
</feature>
<feature type="strand" evidence="8">
    <location>
        <begin position="447"/>
        <end position="462"/>
    </location>
</feature>
<feature type="helix" evidence="8">
    <location>
        <begin position="472"/>
        <end position="480"/>
    </location>
</feature>
<feature type="helix" evidence="8">
    <location>
        <begin position="482"/>
        <end position="486"/>
    </location>
</feature>
<feature type="helix" evidence="8">
    <location>
        <begin position="490"/>
        <end position="502"/>
    </location>
</feature>
<feature type="turn" evidence="8">
    <location>
        <begin position="506"/>
        <end position="508"/>
    </location>
</feature>
<feature type="helix" evidence="8">
    <location>
        <begin position="509"/>
        <end position="524"/>
    </location>
</feature>
<feature type="helix" evidence="8">
    <location>
        <begin position="526"/>
        <end position="532"/>
    </location>
</feature>
<feature type="turn" evidence="8">
    <location>
        <begin position="533"/>
        <end position="536"/>
    </location>
</feature>
<feature type="strand" evidence="8">
    <location>
        <begin position="545"/>
        <end position="550"/>
    </location>
</feature>
<feature type="strand" evidence="8">
    <location>
        <begin position="552"/>
        <end position="562"/>
    </location>
</feature>
<feature type="helix" evidence="8">
    <location>
        <begin position="564"/>
        <end position="568"/>
    </location>
</feature>
<feature type="strand" evidence="8">
    <location>
        <begin position="571"/>
        <end position="578"/>
    </location>
</feature>
<feature type="strand" evidence="8">
    <location>
        <begin position="581"/>
        <end position="590"/>
    </location>
</feature>
<feature type="helix" evidence="8">
    <location>
        <begin position="591"/>
        <end position="593"/>
    </location>
</feature>
<feature type="strand" evidence="8">
    <location>
        <begin position="594"/>
        <end position="599"/>
    </location>
</feature>
<feature type="strand" evidence="8">
    <location>
        <begin position="605"/>
        <end position="610"/>
    </location>
</feature>
<feature type="turn" evidence="8">
    <location>
        <begin position="611"/>
        <end position="614"/>
    </location>
</feature>
<feature type="strand" evidence="8">
    <location>
        <begin position="615"/>
        <end position="621"/>
    </location>
</feature>
<feature type="strand" evidence="8">
    <location>
        <begin position="628"/>
        <end position="637"/>
    </location>
</feature>
<feature type="strand" evidence="8">
    <location>
        <begin position="640"/>
        <end position="642"/>
    </location>
</feature>
<feature type="strand" evidence="8">
    <location>
        <begin position="646"/>
        <end position="652"/>
    </location>
</feature>
<dbReference type="EMBL" id="CP000253">
    <property type="protein sequence ID" value="ABD30910.1"/>
    <property type="molecule type" value="Genomic_DNA"/>
</dbReference>
<dbReference type="RefSeq" id="WP_001032766.1">
    <property type="nucleotide sequence ID" value="NZ_LS483365.1"/>
</dbReference>
<dbReference type="RefSeq" id="YP_500348.1">
    <property type="nucleotide sequence ID" value="NC_007795.1"/>
</dbReference>
<dbReference type="PDB" id="6TB2">
    <property type="method" value="X-ray"/>
    <property type="resolution" value="2.90 A"/>
    <property type="chains" value="D/E=321-655"/>
</dbReference>
<dbReference type="PDB" id="7XLD">
    <property type="method" value="X-ray"/>
    <property type="resolution" value="1.65 A"/>
    <property type="chains" value="A=476-660"/>
</dbReference>
<dbReference type="PDBsum" id="6TB2"/>
<dbReference type="PDBsum" id="7XLD"/>
<dbReference type="BMRB" id="Q2FXJ2"/>
<dbReference type="SMR" id="Q2FXJ2"/>
<dbReference type="STRING" id="93061.SAOUHSC_01843"/>
<dbReference type="PaxDb" id="1280-SAXN108_1760"/>
<dbReference type="ABCD" id="Q2FXJ2">
    <property type="antibodies" value="2 sequenced antibodies"/>
</dbReference>
<dbReference type="GeneID" id="3920522"/>
<dbReference type="KEGG" id="sao:SAOUHSC_01843"/>
<dbReference type="PATRIC" id="fig|93061.5.peg.1679"/>
<dbReference type="eggNOG" id="COG5386">
    <property type="taxonomic scope" value="Bacteria"/>
</dbReference>
<dbReference type="HOGENOM" id="CLU_016167_1_0_9"/>
<dbReference type="OrthoDB" id="2414269at2"/>
<dbReference type="PRO" id="PR:Q2FXJ2"/>
<dbReference type="Proteomes" id="UP000008816">
    <property type="component" value="Chromosome"/>
</dbReference>
<dbReference type="GO" id="GO:0005576">
    <property type="term" value="C:extracellular region"/>
    <property type="evidence" value="ECO:0007669"/>
    <property type="project" value="UniProtKB-KW"/>
</dbReference>
<dbReference type="GO" id="GO:0020037">
    <property type="term" value="F:heme binding"/>
    <property type="evidence" value="ECO:0007669"/>
    <property type="project" value="InterPro"/>
</dbReference>
<dbReference type="CDD" id="cd06920">
    <property type="entry name" value="NEAT"/>
    <property type="match status" value="1"/>
</dbReference>
<dbReference type="Gene3D" id="1.20.58.1270">
    <property type="match status" value="1"/>
</dbReference>
<dbReference type="Gene3D" id="2.60.40.1850">
    <property type="match status" value="3"/>
</dbReference>
<dbReference type="InterPro" id="IPR048652">
    <property type="entry name" value="Isd_H_B_linker"/>
</dbReference>
<dbReference type="InterPro" id="IPR050436">
    <property type="entry name" value="IsdA"/>
</dbReference>
<dbReference type="InterPro" id="IPR019930">
    <property type="entry name" value="IsdH"/>
</dbReference>
<dbReference type="InterPro" id="IPR019931">
    <property type="entry name" value="LPXTG_anchor"/>
</dbReference>
<dbReference type="InterPro" id="IPR006635">
    <property type="entry name" value="NEAT_dom"/>
</dbReference>
<dbReference type="InterPro" id="IPR037250">
    <property type="entry name" value="NEAT_dom_sf"/>
</dbReference>
<dbReference type="InterPro" id="IPR005877">
    <property type="entry name" value="YSIRK_signal_dom"/>
</dbReference>
<dbReference type="NCBIfam" id="TIGR03658">
    <property type="entry name" value="IsdH_HarA"/>
    <property type="match status" value="1"/>
</dbReference>
<dbReference type="NCBIfam" id="TIGR01167">
    <property type="entry name" value="LPXTG_anchor"/>
    <property type="match status" value="1"/>
</dbReference>
<dbReference type="NCBIfam" id="TIGR01168">
    <property type="entry name" value="YSIRK_signal"/>
    <property type="match status" value="1"/>
</dbReference>
<dbReference type="PANTHER" id="PTHR37824">
    <property type="entry name" value="IRON-REGULATED SURFACE DETERMINANT PROTEIN C"/>
    <property type="match status" value="1"/>
</dbReference>
<dbReference type="PANTHER" id="PTHR37824:SF1">
    <property type="entry name" value="IRON-REGULATED SURFACE DETERMINANT PROTEIN C"/>
    <property type="match status" value="1"/>
</dbReference>
<dbReference type="Pfam" id="PF20861">
    <property type="entry name" value="Isd_H_B_linker"/>
    <property type="match status" value="1"/>
</dbReference>
<dbReference type="Pfam" id="PF05031">
    <property type="entry name" value="NEAT"/>
    <property type="match status" value="3"/>
</dbReference>
<dbReference type="Pfam" id="PF04650">
    <property type="entry name" value="YSIRK_signal"/>
    <property type="match status" value="1"/>
</dbReference>
<dbReference type="SMART" id="SM00725">
    <property type="entry name" value="NEAT"/>
    <property type="match status" value="3"/>
</dbReference>
<dbReference type="SUPFAM" id="SSF158911">
    <property type="entry name" value="NEAT domain-like"/>
    <property type="match status" value="3"/>
</dbReference>
<dbReference type="PROSITE" id="PS50847">
    <property type="entry name" value="GRAM_POS_ANCHORING"/>
    <property type="match status" value="1"/>
</dbReference>
<dbReference type="PROSITE" id="PS50978">
    <property type="entry name" value="NEAT"/>
    <property type="match status" value="3"/>
</dbReference>
<accession>Q2FXJ2</accession>
<name>ISDH_STAA8</name>
<keyword id="KW-0002">3D-structure</keyword>
<keyword id="KW-0134">Cell wall</keyword>
<keyword id="KW-0572">Peptidoglycan-anchor</keyword>
<keyword id="KW-1185">Reference proteome</keyword>
<keyword id="KW-0677">Repeat</keyword>
<keyword id="KW-0964">Secreted</keyword>
<keyword id="KW-0732">Signal</keyword>